<organism>
    <name type="scientific">Nitratiruptor sp. (strain SB155-2)</name>
    <dbReference type="NCBI Taxonomy" id="387092"/>
    <lineage>
        <taxon>Bacteria</taxon>
        <taxon>Pseudomonadati</taxon>
        <taxon>Campylobacterota</taxon>
        <taxon>Epsilonproteobacteria</taxon>
        <taxon>Nautiliales</taxon>
        <taxon>Nitratiruptoraceae</taxon>
        <taxon>Nitratiruptor</taxon>
    </lineage>
</organism>
<name>RUVB_NITSB</name>
<comment type="function">
    <text evidence="1">The RuvA-RuvB-RuvC complex processes Holliday junction (HJ) DNA during genetic recombination and DNA repair, while the RuvA-RuvB complex plays an important role in the rescue of blocked DNA replication forks via replication fork reversal (RFR). RuvA specifically binds to HJ cruciform DNA, conferring on it an open structure. The RuvB hexamer acts as an ATP-dependent pump, pulling dsDNA into and through the RuvAB complex. RuvB forms 2 homohexamers on either side of HJ DNA bound by 1 or 2 RuvA tetramers; 4 subunits per hexamer contact DNA at a time. Coordinated motions by a converter formed by DNA-disengaged RuvB subunits stimulates ATP hydrolysis and nucleotide exchange. Immobilization of the converter enables RuvB to convert the ATP-contained energy into a lever motion, pulling 2 nucleotides of DNA out of the RuvA tetramer per ATP hydrolyzed, thus driving DNA branch migration. The RuvB motors rotate together with the DNA substrate, which together with the progressing nucleotide cycle form the mechanistic basis for DNA recombination by continuous HJ branch migration. Branch migration allows RuvC to scan DNA until it finds its consensus sequence, where it cleaves and resolves cruciform DNA.</text>
</comment>
<comment type="catalytic activity">
    <reaction evidence="1">
        <text>ATP + H2O = ADP + phosphate + H(+)</text>
        <dbReference type="Rhea" id="RHEA:13065"/>
        <dbReference type="ChEBI" id="CHEBI:15377"/>
        <dbReference type="ChEBI" id="CHEBI:15378"/>
        <dbReference type="ChEBI" id="CHEBI:30616"/>
        <dbReference type="ChEBI" id="CHEBI:43474"/>
        <dbReference type="ChEBI" id="CHEBI:456216"/>
    </reaction>
</comment>
<comment type="subunit">
    <text evidence="1">Homohexamer. Forms an RuvA(8)-RuvB(12)-Holliday junction (HJ) complex. HJ DNA is sandwiched between 2 RuvA tetramers; dsDNA enters through RuvA and exits via RuvB. An RuvB hexamer assembles on each DNA strand where it exits the tetramer. Each RuvB hexamer is contacted by two RuvA subunits (via domain III) on 2 adjacent RuvB subunits; this complex drives branch migration. In the full resolvosome a probable DNA-RuvA(4)-RuvB(12)-RuvC(2) complex forms which resolves the HJ.</text>
</comment>
<comment type="subcellular location">
    <subcellularLocation>
        <location evidence="1">Cytoplasm</location>
    </subcellularLocation>
</comment>
<comment type="domain">
    <text evidence="1">Has 3 domains, the large (RuvB-L) and small ATPase (RuvB-S) domains and the C-terminal head (RuvB-H) domain. The head domain binds DNA, while the ATPase domains jointly bind ATP, ADP or are empty depending on the state of the subunit in the translocation cycle. During a single DNA translocation step the structure of each domain remains the same, but their relative positions change.</text>
</comment>
<comment type="similarity">
    <text evidence="1">Belongs to the RuvB family.</text>
</comment>
<proteinExistence type="inferred from homology"/>
<gene>
    <name evidence="1" type="primary">ruvB</name>
    <name type="ordered locus">NIS_0372</name>
</gene>
<feature type="chain" id="PRO_1000001435" description="Holliday junction branch migration complex subunit RuvB">
    <location>
        <begin position="1"/>
        <end position="335"/>
    </location>
</feature>
<feature type="region of interest" description="Large ATPase domain (RuvB-L)" evidence="1">
    <location>
        <begin position="1"/>
        <end position="181"/>
    </location>
</feature>
<feature type="region of interest" description="Small ATPAse domain (RuvB-S)" evidence="1">
    <location>
        <begin position="182"/>
        <end position="252"/>
    </location>
</feature>
<feature type="region of interest" description="Head domain (RuvB-H)" evidence="1">
    <location>
        <begin position="255"/>
        <end position="335"/>
    </location>
</feature>
<feature type="binding site" evidence="1">
    <location>
        <position position="20"/>
    </location>
    <ligand>
        <name>ATP</name>
        <dbReference type="ChEBI" id="CHEBI:30616"/>
    </ligand>
</feature>
<feature type="binding site" evidence="1">
    <location>
        <position position="21"/>
    </location>
    <ligand>
        <name>ATP</name>
        <dbReference type="ChEBI" id="CHEBI:30616"/>
    </ligand>
</feature>
<feature type="binding site" evidence="1">
    <location>
        <position position="62"/>
    </location>
    <ligand>
        <name>ATP</name>
        <dbReference type="ChEBI" id="CHEBI:30616"/>
    </ligand>
</feature>
<feature type="binding site" evidence="1">
    <location>
        <position position="65"/>
    </location>
    <ligand>
        <name>ATP</name>
        <dbReference type="ChEBI" id="CHEBI:30616"/>
    </ligand>
</feature>
<feature type="binding site" evidence="1">
    <location>
        <position position="66"/>
    </location>
    <ligand>
        <name>ATP</name>
        <dbReference type="ChEBI" id="CHEBI:30616"/>
    </ligand>
</feature>
<feature type="binding site" evidence="1">
    <location>
        <position position="66"/>
    </location>
    <ligand>
        <name>Mg(2+)</name>
        <dbReference type="ChEBI" id="CHEBI:18420"/>
    </ligand>
</feature>
<feature type="binding site" evidence="1">
    <location>
        <position position="67"/>
    </location>
    <ligand>
        <name>ATP</name>
        <dbReference type="ChEBI" id="CHEBI:30616"/>
    </ligand>
</feature>
<feature type="binding site" evidence="1">
    <location>
        <begin position="128"/>
        <end position="130"/>
    </location>
    <ligand>
        <name>ATP</name>
        <dbReference type="ChEBI" id="CHEBI:30616"/>
    </ligand>
</feature>
<feature type="binding site" evidence="1">
    <location>
        <position position="171"/>
    </location>
    <ligand>
        <name>ATP</name>
        <dbReference type="ChEBI" id="CHEBI:30616"/>
    </ligand>
</feature>
<feature type="binding site" evidence="1">
    <location>
        <position position="181"/>
    </location>
    <ligand>
        <name>ATP</name>
        <dbReference type="ChEBI" id="CHEBI:30616"/>
    </ligand>
</feature>
<feature type="binding site" evidence="1">
    <location>
        <position position="218"/>
    </location>
    <ligand>
        <name>ATP</name>
        <dbReference type="ChEBI" id="CHEBI:30616"/>
    </ligand>
</feature>
<feature type="binding site" evidence="1">
    <location>
        <position position="309"/>
    </location>
    <ligand>
        <name>DNA</name>
        <dbReference type="ChEBI" id="CHEBI:16991"/>
    </ligand>
</feature>
<feature type="binding site" evidence="1">
    <location>
        <position position="314"/>
    </location>
    <ligand>
        <name>DNA</name>
        <dbReference type="ChEBI" id="CHEBI:16991"/>
    </ligand>
</feature>
<protein>
    <recommendedName>
        <fullName evidence="1">Holliday junction branch migration complex subunit RuvB</fullName>
        <ecNumber evidence="1">3.6.4.-</ecNumber>
    </recommendedName>
</protein>
<sequence length="335" mass="37305">MERIVEVEKFSEESSFETTLRPSDWDEYIGQEKIKNNLKVFIQACKKRGETLDHVLFFGPPGLGKTTLSLIIASQMEANIKITAAPMIEKSGDLAAILTNLEEGDILFIDEIHRLSPAIEEILYPAMEDFRLDIIIGSGPAAQTIKIDLPKFTLIGATTRAGMLSSPLRDRFGMHFRLQFYTPQELAQIITNAANKLSKDIDAEAALEIAKRSRGTPRIALRLLKRVRDFSDVADEKTITLKRTQKALEALGVDERGFDELDLKLLKLLADAKGKPLGLSTIAAALSEDEGTIEDVIEPFLLANGYLERTARGRMATLKTYEILKLTPNIQNSLF</sequence>
<dbReference type="EC" id="3.6.4.-" evidence="1"/>
<dbReference type="EMBL" id="AP009178">
    <property type="protein sequence ID" value="BAF69486.1"/>
    <property type="molecule type" value="Genomic_DNA"/>
</dbReference>
<dbReference type="RefSeq" id="WP_012081749.1">
    <property type="nucleotide sequence ID" value="NC_009662.1"/>
</dbReference>
<dbReference type="SMR" id="A6Q1X7"/>
<dbReference type="FunCoup" id="A6Q1X7">
    <property type="interactions" value="231"/>
</dbReference>
<dbReference type="STRING" id="387092.NIS_0372"/>
<dbReference type="KEGG" id="nis:NIS_0372"/>
<dbReference type="eggNOG" id="COG2255">
    <property type="taxonomic scope" value="Bacteria"/>
</dbReference>
<dbReference type="HOGENOM" id="CLU_055599_1_0_7"/>
<dbReference type="InParanoid" id="A6Q1X7"/>
<dbReference type="OrthoDB" id="9804478at2"/>
<dbReference type="Proteomes" id="UP000001118">
    <property type="component" value="Chromosome"/>
</dbReference>
<dbReference type="GO" id="GO:0005737">
    <property type="term" value="C:cytoplasm"/>
    <property type="evidence" value="ECO:0007669"/>
    <property type="project" value="UniProtKB-SubCell"/>
</dbReference>
<dbReference type="GO" id="GO:0048476">
    <property type="term" value="C:Holliday junction resolvase complex"/>
    <property type="evidence" value="ECO:0007669"/>
    <property type="project" value="UniProtKB-UniRule"/>
</dbReference>
<dbReference type="GO" id="GO:0005524">
    <property type="term" value="F:ATP binding"/>
    <property type="evidence" value="ECO:0007669"/>
    <property type="project" value="UniProtKB-UniRule"/>
</dbReference>
<dbReference type="GO" id="GO:0016887">
    <property type="term" value="F:ATP hydrolysis activity"/>
    <property type="evidence" value="ECO:0007669"/>
    <property type="project" value="InterPro"/>
</dbReference>
<dbReference type="GO" id="GO:0000400">
    <property type="term" value="F:four-way junction DNA binding"/>
    <property type="evidence" value="ECO:0007669"/>
    <property type="project" value="UniProtKB-UniRule"/>
</dbReference>
<dbReference type="GO" id="GO:0009378">
    <property type="term" value="F:four-way junction helicase activity"/>
    <property type="evidence" value="ECO:0007669"/>
    <property type="project" value="InterPro"/>
</dbReference>
<dbReference type="GO" id="GO:0006310">
    <property type="term" value="P:DNA recombination"/>
    <property type="evidence" value="ECO:0007669"/>
    <property type="project" value="UniProtKB-UniRule"/>
</dbReference>
<dbReference type="GO" id="GO:0006281">
    <property type="term" value="P:DNA repair"/>
    <property type="evidence" value="ECO:0007669"/>
    <property type="project" value="UniProtKB-UniRule"/>
</dbReference>
<dbReference type="CDD" id="cd00009">
    <property type="entry name" value="AAA"/>
    <property type="match status" value="1"/>
</dbReference>
<dbReference type="Gene3D" id="1.10.8.60">
    <property type="match status" value="1"/>
</dbReference>
<dbReference type="Gene3D" id="3.40.50.300">
    <property type="entry name" value="P-loop containing nucleotide triphosphate hydrolases"/>
    <property type="match status" value="1"/>
</dbReference>
<dbReference type="Gene3D" id="1.10.10.10">
    <property type="entry name" value="Winged helix-like DNA-binding domain superfamily/Winged helix DNA-binding domain"/>
    <property type="match status" value="1"/>
</dbReference>
<dbReference type="HAMAP" id="MF_00016">
    <property type="entry name" value="DNA_HJ_migration_RuvB"/>
    <property type="match status" value="1"/>
</dbReference>
<dbReference type="InterPro" id="IPR003593">
    <property type="entry name" value="AAA+_ATPase"/>
</dbReference>
<dbReference type="InterPro" id="IPR041445">
    <property type="entry name" value="AAA_lid_4"/>
</dbReference>
<dbReference type="InterPro" id="IPR004605">
    <property type="entry name" value="DNA_helicase_Holl-junc_RuvB"/>
</dbReference>
<dbReference type="InterPro" id="IPR027417">
    <property type="entry name" value="P-loop_NTPase"/>
</dbReference>
<dbReference type="InterPro" id="IPR008824">
    <property type="entry name" value="RuvB-like_N"/>
</dbReference>
<dbReference type="InterPro" id="IPR008823">
    <property type="entry name" value="RuvB_C"/>
</dbReference>
<dbReference type="InterPro" id="IPR036388">
    <property type="entry name" value="WH-like_DNA-bd_sf"/>
</dbReference>
<dbReference type="InterPro" id="IPR036390">
    <property type="entry name" value="WH_DNA-bd_sf"/>
</dbReference>
<dbReference type="NCBIfam" id="NF000868">
    <property type="entry name" value="PRK00080.1"/>
    <property type="match status" value="1"/>
</dbReference>
<dbReference type="NCBIfam" id="TIGR00635">
    <property type="entry name" value="ruvB"/>
    <property type="match status" value="1"/>
</dbReference>
<dbReference type="PANTHER" id="PTHR42848">
    <property type="match status" value="1"/>
</dbReference>
<dbReference type="PANTHER" id="PTHR42848:SF1">
    <property type="entry name" value="HOLLIDAY JUNCTION BRANCH MIGRATION COMPLEX SUBUNIT RUVB"/>
    <property type="match status" value="1"/>
</dbReference>
<dbReference type="Pfam" id="PF17864">
    <property type="entry name" value="AAA_lid_4"/>
    <property type="match status" value="1"/>
</dbReference>
<dbReference type="Pfam" id="PF05491">
    <property type="entry name" value="RuvB_C"/>
    <property type="match status" value="1"/>
</dbReference>
<dbReference type="Pfam" id="PF05496">
    <property type="entry name" value="RuvB_N"/>
    <property type="match status" value="1"/>
</dbReference>
<dbReference type="SMART" id="SM00382">
    <property type="entry name" value="AAA"/>
    <property type="match status" value="1"/>
</dbReference>
<dbReference type="SUPFAM" id="SSF52540">
    <property type="entry name" value="P-loop containing nucleoside triphosphate hydrolases"/>
    <property type="match status" value="1"/>
</dbReference>
<dbReference type="SUPFAM" id="SSF46785">
    <property type="entry name" value="Winged helix' DNA-binding domain"/>
    <property type="match status" value="1"/>
</dbReference>
<evidence type="ECO:0000255" key="1">
    <source>
        <dbReference type="HAMAP-Rule" id="MF_00016"/>
    </source>
</evidence>
<reference key="1">
    <citation type="journal article" date="2007" name="Proc. Natl. Acad. Sci. U.S.A.">
        <title>Deep-sea vent epsilon-proteobacterial genomes provide insights into emergence of pathogens.</title>
        <authorList>
            <person name="Nakagawa S."/>
            <person name="Takaki Y."/>
            <person name="Shimamura S."/>
            <person name="Reysenbach A.-L."/>
            <person name="Takai K."/>
            <person name="Horikoshi K."/>
        </authorList>
    </citation>
    <scope>NUCLEOTIDE SEQUENCE [LARGE SCALE GENOMIC DNA]</scope>
    <source>
        <strain>SB155-2</strain>
    </source>
</reference>
<accession>A6Q1X7</accession>
<keyword id="KW-0067">ATP-binding</keyword>
<keyword id="KW-0963">Cytoplasm</keyword>
<keyword id="KW-0227">DNA damage</keyword>
<keyword id="KW-0233">DNA recombination</keyword>
<keyword id="KW-0234">DNA repair</keyword>
<keyword id="KW-0238">DNA-binding</keyword>
<keyword id="KW-0378">Hydrolase</keyword>
<keyword id="KW-0547">Nucleotide-binding</keyword>
<keyword id="KW-1185">Reference proteome</keyword>